<protein>
    <recommendedName>
        <fullName evidence="1">Peptidyl-tRNA hydrolase</fullName>
        <shortName evidence="1">Pth</shortName>
        <ecNumber evidence="1">3.1.1.29</ecNumber>
    </recommendedName>
</protein>
<proteinExistence type="inferred from homology"/>
<reference key="1">
    <citation type="submission" date="2007-08" db="EMBL/GenBank/DDBJ databases">
        <authorList>
            <consortium name="The Vibrio harveyi Genome Sequencing Project"/>
            <person name="Bassler B."/>
            <person name="Clifton S.W."/>
            <person name="Fulton L."/>
            <person name="Delehaunty K."/>
            <person name="Fronick C."/>
            <person name="Harrison M."/>
            <person name="Markivic C."/>
            <person name="Fulton R."/>
            <person name="Tin-Wollam A.-M."/>
            <person name="Shah N."/>
            <person name="Pepin K."/>
            <person name="Nash W."/>
            <person name="Thiruvilangam P."/>
            <person name="Bhonagiri V."/>
            <person name="Waters C."/>
            <person name="Tu K.C."/>
            <person name="Irgon J."/>
            <person name="Wilson R.K."/>
        </authorList>
    </citation>
    <scope>NUCLEOTIDE SEQUENCE [LARGE SCALE GENOMIC DNA]</scope>
    <source>
        <strain>ATCC BAA-1116 / BB120</strain>
    </source>
</reference>
<organism>
    <name type="scientific">Vibrio campbellii (strain ATCC BAA-1116)</name>
    <dbReference type="NCBI Taxonomy" id="2902295"/>
    <lineage>
        <taxon>Bacteria</taxon>
        <taxon>Pseudomonadati</taxon>
        <taxon>Pseudomonadota</taxon>
        <taxon>Gammaproteobacteria</taxon>
        <taxon>Vibrionales</taxon>
        <taxon>Vibrionaceae</taxon>
        <taxon>Vibrio</taxon>
    </lineage>
</organism>
<evidence type="ECO:0000255" key="1">
    <source>
        <dbReference type="HAMAP-Rule" id="MF_00083"/>
    </source>
</evidence>
<dbReference type="EC" id="3.1.1.29" evidence="1"/>
<dbReference type="EMBL" id="CP000789">
    <property type="protein sequence ID" value="ABU70224.1"/>
    <property type="molecule type" value="Genomic_DNA"/>
</dbReference>
<dbReference type="RefSeq" id="WP_012127198.1">
    <property type="nucleotide sequence ID" value="NC_009783.1"/>
</dbReference>
<dbReference type="SMR" id="A7MY77"/>
<dbReference type="KEGG" id="vha:VIBHAR_01245"/>
<dbReference type="PATRIC" id="fig|338187.25.peg.1397"/>
<dbReference type="Proteomes" id="UP000008152">
    <property type="component" value="Chromosome I"/>
</dbReference>
<dbReference type="GO" id="GO:0005737">
    <property type="term" value="C:cytoplasm"/>
    <property type="evidence" value="ECO:0007669"/>
    <property type="project" value="UniProtKB-SubCell"/>
</dbReference>
<dbReference type="GO" id="GO:0004045">
    <property type="term" value="F:peptidyl-tRNA hydrolase activity"/>
    <property type="evidence" value="ECO:0007669"/>
    <property type="project" value="UniProtKB-UniRule"/>
</dbReference>
<dbReference type="GO" id="GO:0000049">
    <property type="term" value="F:tRNA binding"/>
    <property type="evidence" value="ECO:0007669"/>
    <property type="project" value="UniProtKB-UniRule"/>
</dbReference>
<dbReference type="GO" id="GO:0006515">
    <property type="term" value="P:protein quality control for misfolded or incompletely synthesized proteins"/>
    <property type="evidence" value="ECO:0007669"/>
    <property type="project" value="UniProtKB-UniRule"/>
</dbReference>
<dbReference type="GO" id="GO:0072344">
    <property type="term" value="P:rescue of stalled ribosome"/>
    <property type="evidence" value="ECO:0007669"/>
    <property type="project" value="UniProtKB-UniRule"/>
</dbReference>
<dbReference type="CDD" id="cd00462">
    <property type="entry name" value="PTH"/>
    <property type="match status" value="1"/>
</dbReference>
<dbReference type="FunFam" id="3.40.50.1470:FF:000001">
    <property type="entry name" value="Peptidyl-tRNA hydrolase"/>
    <property type="match status" value="1"/>
</dbReference>
<dbReference type="Gene3D" id="3.40.50.1470">
    <property type="entry name" value="Peptidyl-tRNA hydrolase"/>
    <property type="match status" value="1"/>
</dbReference>
<dbReference type="HAMAP" id="MF_00083">
    <property type="entry name" value="Pept_tRNA_hydro_bact"/>
    <property type="match status" value="1"/>
</dbReference>
<dbReference type="InterPro" id="IPR001328">
    <property type="entry name" value="Pept_tRNA_hydro"/>
</dbReference>
<dbReference type="InterPro" id="IPR018171">
    <property type="entry name" value="Pept_tRNA_hydro_CS"/>
</dbReference>
<dbReference type="InterPro" id="IPR036416">
    <property type="entry name" value="Pept_tRNA_hydro_sf"/>
</dbReference>
<dbReference type="NCBIfam" id="TIGR00447">
    <property type="entry name" value="pth"/>
    <property type="match status" value="1"/>
</dbReference>
<dbReference type="PANTHER" id="PTHR17224">
    <property type="entry name" value="PEPTIDYL-TRNA HYDROLASE"/>
    <property type="match status" value="1"/>
</dbReference>
<dbReference type="PANTHER" id="PTHR17224:SF1">
    <property type="entry name" value="PEPTIDYL-TRNA HYDROLASE"/>
    <property type="match status" value="1"/>
</dbReference>
<dbReference type="Pfam" id="PF01195">
    <property type="entry name" value="Pept_tRNA_hydro"/>
    <property type="match status" value="1"/>
</dbReference>
<dbReference type="SUPFAM" id="SSF53178">
    <property type="entry name" value="Peptidyl-tRNA hydrolase-like"/>
    <property type="match status" value="1"/>
</dbReference>
<dbReference type="PROSITE" id="PS01195">
    <property type="entry name" value="PEPT_TRNA_HYDROL_1"/>
    <property type="match status" value="1"/>
</dbReference>
<dbReference type="PROSITE" id="PS01196">
    <property type="entry name" value="PEPT_TRNA_HYDROL_2"/>
    <property type="match status" value="1"/>
</dbReference>
<gene>
    <name evidence="1" type="primary">pth</name>
    <name type="ordered locus">VIBHAR_01245</name>
</gene>
<feature type="chain" id="PRO_1000010664" description="Peptidyl-tRNA hydrolase">
    <location>
        <begin position="1"/>
        <end position="196"/>
    </location>
</feature>
<feature type="active site" description="Proton acceptor" evidence="1">
    <location>
        <position position="23"/>
    </location>
</feature>
<feature type="binding site" evidence="1">
    <location>
        <position position="18"/>
    </location>
    <ligand>
        <name>tRNA</name>
        <dbReference type="ChEBI" id="CHEBI:17843"/>
    </ligand>
</feature>
<feature type="binding site" evidence="1">
    <location>
        <position position="69"/>
    </location>
    <ligand>
        <name>tRNA</name>
        <dbReference type="ChEBI" id="CHEBI:17843"/>
    </ligand>
</feature>
<feature type="binding site" evidence="1">
    <location>
        <position position="71"/>
    </location>
    <ligand>
        <name>tRNA</name>
        <dbReference type="ChEBI" id="CHEBI:17843"/>
    </ligand>
</feature>
<feature type="binding site" evidence="1">
    <location>
        <position position="117"/>
    </location>
    <ligand>
        <name>tRNA</name>
        <dbReference type="ChEBI" id="CHEBI:17843"/>
    </ligand>
</feature>
<feature type="site" description="Discriminates between blocked and unblocked aminoacyl-tRNA" evidence="1">
    <location>
        <position position="13"/>
    </location>
</feature>
<feature type="site" description="Stabilizes the basic form of H active site to accept a proton" evidence="1">
    <location>
        <position position="96"/>
    </location>
</feature>
<keyword id="KW-0963">Cytoplasm</keyword>
<keyword id="KW-0378">Hydrolase</keyword>
<keyword id="KW-0694">RNA-binding</keyword>
<keyword id="KW-0820">tRNA-binding</keyword>
<comment type="function">
    <text evidence="1">Hydrolyzes ribosome-free peptidyl-tRNAs (with 1 or more amino acids incorporated), which drop off the ribosome during protein synthesis, or as a result of ribosome stalling.</text>
</comment>
<comment type="function">
    <text evidence="1">Catalyzes the release of premature peptidyl moieties from peptidyl-tRNA molecules trapped in stalled 50S ribosomal subunits, and thus maintains levels of free tRNAs and 50S ribosomes.</text>
</comment>
<comment type="catalytic activity">
    <reaction evidence="1">
        <text>an N-acyl-L-alpha-aminoacyl-tRNA + H2O = an N-acyl-L-amino acid + a tRNA + H(+)</text>
        <dbReference type="Rhea" id="RHEA:54448"/>
        <dbReference type="Rhea" id="RHEA-COMP:10123"/>
        <dbReference type="Rhea" id="RHEA-COMP:13883"/>
        <dbReference type="ChEBI" id="CHEBI:15377"/>
        <dbReference type="ChEBI" id="CHEBI:15378"/>
        <dbReference type="ChEBI" id="CHEBI:59874"/>
        <dbReference type="ChEBI" id="CHEBI:78442"/>
        <dbReference type="ChEBI" id="CHEBI:138191"/>
        <dbReference type="EC" id="3.1.1.29"/>
    </reaction>
</comment>
<comment type="subunit">
    <text evidence="1">Monomer.</text>
</comment>
<comment type="subcellular location">
    <subcellularLocation>
        <location evidence="1">Cytoplasm</location>
    </subcellularLocation>
</comment>
<comment type="similarity">
    <text evidence="1">Belongs to the PTH family.</text>
</comment>
<sequence length="196" mass="21421">MTQPIKLLVGLANPGPEYAKTRHNAGAWVVEELARVHNVTLKNEPKFFGLTGRIMVNGQDLRLLIPTTFMNLSGKAIAALAKFYQIKPEEIMVAHDELDLLPGVAKFKKGGGHGGHNGLRDTISKLGNNKDFYRLRIGIGHPGHKDKVAGFVLGKAPAKEQELLDAAADESVRCLDILIKDGLSKAQNRLHTFKAE</sequence>
<accession>A7MY77</accession>
<name>PTH_VIBC1</name>